<reference key="1">
    <citation type="journal article" date="2008" name="Genome Biol.">
        <title>Encapsulated in silica: genome, proteome and physiology of the thermophilic bacterium Anoxybacillus flavithermus WK1.</title>
        <authorList>
            <person name="Saw J.H."/>
            <person name="Mountain B.W."/>
            <person name="Feng L."/>
            <person name="Omelchenko M.V."/>
            <person name="Hou S."/>
            <person name="Saito J.A."/>
            <person name="Stott M.B."/>
            <person name="Li D."/>
            <person name="Zhao G."/>
            <person name="Wu J."/>
            <person name="Galperin M.Y."/>
            <person name="Koonin E.V."/>
            <person name="Makarova K.S."/>
            <person name="Wolf Y.I."/>
            <person name="Rigden D.J."/>
            <person name="Dunfield P.F."/>
            <person name="Wang L."/>
            <person name="Alam M."/>
        </authorList>
    </citation>
    <scope>NUCLEOTIDE SEQUENCE [LARGE SCALE GENOMIC DNA]</scope>
    <source>
        <strain>DSM 21510 / WK1</strain>
    </source>
</reference>
<sequence>MLAVHFGAGNIGRGFIGSLLSQSRYNVVFVDVNEKIVQALQQKGQYEVIIAGETTQTQVVRNVSALHSQHQQNEIIDQIARADLVTTAVGPNILPLISQTIAEGLKKRLTDRPVHIIACENMIGGSEHLKTYVWEHLSEQEQTSLEDKCGFLNCAVDRIVPNQTHEDPLTVVVEPFFEWVIETKEVIGNIPHIIGAHFVDDLQPYIERKLFTVNTGHALVAYLGYRKKYETIRQAMEDQDILADVTNALRESGRVLVHQYGWNEAEHQAYIEKIVQRFINPSMTDEVTRVARSPIRKLGPNDRLIRPAMKYYECFGEVPASLAKGIAALLLFDYEGDAEAVQLQQTIKESGVEGALEKYAKLPSNHPIVVEVKKQMLYM</sequence>
<evidence type="ECO:0000255" key="1">
    <source>
        <dbReference type="HAMAP-Rule" id="MF_00196"/>
    </source>
</evidence>
<accession>B7GJR4</accession>
<dbReference type="EC" id="1.1.1.17" evidence="1"/>
<dbReference type="EMBL" id="CP000922">
    <property type="protein sequence ID" value="ACJ33927.1"/>
    <property type="molecule type" value="Genomic_DNA"/>
</dbReference>
<dbReference type="RefSeq" id="WP_012575150.1">
    <property type="nucleotide sequence ID" value="NC_011567.1"/>
</dbReference>
<dbReference type="SMR" id="B7GJR4"/>
<dbReference type="STRING" id="491915.Aflv_1562"/>
<dbReference type="GeneID" id="7037817"/>
<dbReference type="KEGG" id="afl:Aflv_1562"/>
<dbReference type="PATRIC" id="fig|491915.6.peg.1611"/>
<dbReference type="eggNOG" id="COG0246">
    <property type="taxonomic scope" value="Bacteria"/>
</dbReference>
<dbReference type="HOGENOM" id="CLU_036089_2_0_9"/>
<dbReference type="Proteomes" id="UP000000742">
    <property type="component" value="Chromosome"/>
</dbReference>
<dbReference type="GO" id="GO:0005829">
    <property type="term" value="C:cytosol"/>
    <property type="evidence" value="ECO:0007669"/>
    <property type="project" value="TreeGrafter"/>
</dbReference>
<dbReference type="GO" id="GO:0008926">
    <property type="term" value="F:mannitol-1-phosphate 5-dehydrogenase activity"/>
    <property type="evidence" value="ECO:0007669"/>
    <property type="project" value="UniProtKB-UniRule"/>
</dbReference>
<dbReference type="GO" id="GO:0019592">
    <property type="term" value="P:mannitol catabolic process"/>
    <property type="evidence" value="ECO:0007669"/>
    <property type="project" value="TreeGrafter"/>
</dbReference>
<dbReference type="Gene3D" id="1.10.1040.10">
    <property type="entry name" value="N-(1-d-carboxylethyl)-l-norvaline Dehydrogenase, domain 2"/>
    <property type="match status" value="1"/>
</dbReference>
<dbReference type="Gene3D" id="3.40.50.720">
    <property type="entry name" value="NAD(P)-binding Rossmann-like Domain"/>
    <property type="match status" value="1"/>
</dbReference>
<dbReference type="HAMAP" id="MF_00196">
    <property type="entry name" value="Mannitol_dehydrog"/>
    <property type="match status" value="1"/>
</dbReference>
<dbReference type="InterPro" id="IPR008927">
    <property type="entry name" value="6-PGluconate_DH-like_C_sf"/>
</dbReference>
<dbReference type="InterPro" id="IPR013328">
    <property type="entry name" value="6PGD_dom2"/>
</dbReference>
<dbReference type="InterPro" id="IPR023028">
    <property type="entry name" value="Mannitol_1_phos_5_DH"/>
</dbReference>
<dbReference type="InterPro" id="IPR000669">
    <property type="entry name" value="Mannitol_DH"/>
</dbReference>
<dbReference type="InterPro" id="IPR013118">
    <property type="entry name" value="Mannitol_DH_C"/>
</dbReference>
<dbReference type="InterPro" id="IPR013131">
    <property type="entry name" value="Mannitol_DH_N"/>
</dbReference>
<dbReference type="InterPro" id="IPR036291">
    <property type="entry name" value="NAD(P)-bd_dom_sf"/>
</dbReference>
<dbReference type="NCBIfam" id="NF002646">
    <property type="entry name" value="PRK02318.1-2"/>
    <property type="match status" value="1"/>
</dbReference>
<dbReference type="NCBIfam" id="NF002647">
    <property type="entry name" value="PRK02318.1-3"/>
    <property type="match status" value="1"/>
</dbReference>
<dbReference type="NCBIfam" id="NF002649">
    <property type="entry name" value="PRK02318.2-1"/>
    <property type="match status" value="1"/>
</dbReference>
<dbReference type="NCBIfam" id="NF002652">
    <property type="entry name" value="PRK02318.2-5"/>
    <property type="match status" value="1"/>
</dbReference>
<dbReference type="PANTHER" id="PTHR30524:SF0">
    <property type="entry name" value="ALTRONATE OXIDOREDUCTASE-RELATED"/>
    <property type="match status" value="1"/>
</dbReference>
<dbReference type="PANTHER" id="PTHR30524">
    <property type="entry name" value="MANNITOL-1-PHOSPHATE 5-DEHYDROGENASE"/>
    <property type="match status" value="1"/>
</dbReference>
<dbReference type="Pfam" id="PF01232">
    <property type="entry name" value="Mannitol_dh"/>
    <property type="match status" value="1"/>
</dbReference>
<dbReference type="Pfam" id="PF08125">
    <property type="entry name" value="Mannitol_dh_C"/>
    <property type="match status" value="1"/>
</dbReference>
<dbReference type="PRINTS" id="PR00084">
    <property type="entry name" value="MTLDHDRGNASE"/>
</dbReference>
<dbReference type="SUPFAM" id="SSF48179">
    <property type="entry name" value="6-phosphogluconate dehydrogenase C-terminal domain-like"/>
    <property type="match status" value="1"/>
</dbReference>
<dbReference type="SUPFAM" id="SSF51735">
    <property type="entry name" value="NAD(P)-binding Rossmann-fold domains"/>
    <property type="match status" value="1"/>
</dbReference>
<feature type="chain" id="PRO_1000118653" description="Mannitol-1-phosphate 5-dehydrogenase">
    <location>
        <begin position="1"/>
        <end position="379"/>
    </location>
</feature>
<feature type="binding site" evidence="1">
    <location>
        <begin position="3"/>
        <end position="14"/>
    </location>
    <ligand>
        <name>NAD(+)</name>
        <dbReference type="ChEBI" id="CHEBI:57540"/>
    </ligand>
</feature>
<organism>
    <name type="scientific">Anoxybacillus flavithermus (strain DSM 21510 / WK1)</name>
    <dbReference type="NCBI Taxonomy" id="491915"/>
    <lineage>
        <taxon>Bacteria</taxon>
        <taxon>Bacillati</taxon>
        <taxon>Bacillota</taxon>
        <taxon>Bacilli</taxon>
        <taxon>Bacillales</taxon>
        <taxon>Anoxybacillaceae</taxon>
        <taxon>Anoxybacillus</taxon>
    </lineage>
</organism>
<name>MTLD_ANOFW</name>
<protein>
    <recommendedName>
        <fullName evidence="1">Mannitol-1-phosphate 5-dehydrogenase</fullName>
        <ecNumber evidence="1">1.1.1.17</ecNumber>
    </recommendedName>
</protein>
<keyword id="KW-0520">NAD</keyword>
<keyword id="KW-0560">Oxidoreductase</keyword>
<comment type="catalytic activity">
    <reaction evidence="1">
        <text>D-mannitol 1-phosphate + NAD(+) = beta-D-fructose 6-phosphate + NADH + H(+)</text>
        <dbReference type="Rhea" id="RHEA:19661"/>
        <dbReference type="ChEBI" id="CHEBI:15378"/>
        <dbReference type="ChEBI" id="CHEBI:57540"/>
        <dbReference type="ChEBI" id="CHEBI:57634"/>
        <dbReference type="ChEBI" id="CHEBI:57945"/>
        <dbReference type="ChEBI" id="CHEBI:61381"/>
        <dbReference type="EC" id="1.1.1.17"/>
    </reaction>
</comment>
<comment type="similarity">
    <text evidence="1">Belongs to the mannitol dehydrogenase family.</text>
</comment>
<proteinExistence type="inferred from homology"/>
<gene>
    <name evidence="1" type="primary">mtlD</name>
    <name type="ordered locus">Aflv_1562</name>
</gene>